<protein>
    <recommendedName>
        <fullName evidence="1">4-hydroxy-3-methylbut-2-en-1-yl diphosphate synthase (flavodoxin)</fullName>
        <ecNumber evidence="1">1.17.7.3</ecNumber>
    </recommendedName>
    <alternativeName>
        <fullName evidence="1">1-hydroxy-2-methyl-2-(E)-butenyl 4-diphosphate synthase</fullName>
    </alternativeName>
</protein>
<gene>
    <name evidence="1" type="primary">ispG</name>
    <name type="ordered locus">KPN78578_27940</name>
    <name type="ORF">KPN_02845</name>
</gene>
<feature type="chain" id="PRO_1000011477" description="4-hydroxy-3-methylbut-2-en-1-yl diphosphate synthase (flavodoxin)">
    <location>
        <begin position="1"/>
        <end position="373"/>
    </location>
</feature>
<feature type="binding site" evidence="1">
    <location>
        <position position="270"/>
    </location>
    <ligand>
        <name>[4Fe-4S] cluster</name>
        <dbReference type="ChEBI" id="CHEBI:49883"/>
    </ligand>
</feature>
<feature type="binding site" evidence="1">
    <location>
        <position position="273"/>
    </location>
    <ligand>
        <name>[4Fe-4S] cluster</name>
        <dbReference type="ChEBI" id="CHEBI:49883"/>
    </ligand>
</feature>
<feature type="binding site" evidence="1">
    <location>
        <position position="305"/>
    </location>
    <ligand>
        <name>[4Fe-4S] cluster</name>
        <dbReference type="ChEBI" id="CHEBI:49883"/>
    </ligand>
</feature>
<feature type="binding site" evidence="1">
    <location>
        <position position="312"/>
    </location>
    <ligand>
        <name>[4Fe-4S] cluster</name>
        <dbReference type="ChEBI" id="CHEBI:49883"/>
    </ligand>
</feature>
<name>ISPG_KLEP7</name>
<dbReference type="EC" id="1.17.7.3" evidence="1"/>
<dbReference type="EMBL" id="CP000647">
    <property type="protein sequence ID" value="ABR78255.1"/>
    <property type="molecule type" value="Genomic_DNA"/>
</dbReference>
<dbReference type="RefSeq" id="WP_002913892.1">
    <property type="nucleotide sequence ID" value="NC_009648.1"/>
</dbReference>
<dbReference type="SMR" id="A6TCD4"/>
<dbReference type="STRING" id="272620.KPN_02845"/>
<dbReference type="jPOST" id="A6TCD4"/>
<dbReference type="PaxDb" id="272620-KPN_02845"/>
<dbReference type="EnsemblBacteria" id="ABR78255">
    <property type="protein sequence ID" value="ABR78255"/>
    <property type="gene ID" value="KPN_02845"/>
</dbReference>
<dbReference type="KEGG" id="kpn:KPN_02845"/>
<dbReference type="HOGENOM" id="CLU_042258_0_0_6"/>
<dbReference type="UniPathway" id="UPA00056">
    <property type="reaction ID" value="UER00096"/>
</dbReference>
<dbReference type="Proteomes" id="UP000000265">
    <property type="component" value="Chromosome"/>
</dbReference>
<dbReference type="GO" id="GO:0051539">
    <property type="term" value="F:4 iron, 4 sulfur cluster binding"/>
    <property type="evidence" value="ECO:0007669"/>
    <property type="project" value="UniProtKB-UniRule"/>
</dbReference>
<dbReference type="GO" id="GO:0046429">
    <property type="term" value="F:4-hydroxy-3-methylbut-2-en-1-yl diphosphate synthase activity (ferredoxin)"/>
    <property type="evidence" value="ECO:0007669"/>
    <property type="project" value="UniProtKB-UniRule"/>
</dbReference>
<dbReference type="GO" id="GO:0141197">
    <property type="term" value="F:4-hydroxy-3-methylbut-2-enyl-diphosphate synthase activity (flavodoxin)"/>
    <property type="evidence" value="ECO:0007669"/>
    <property type="project" value="UniProtKB-EC"/>
</dbReference>
<dbReference type="GO" id="GO:0005506">
    <property type="term" value="F:iron ion binding"/>
    <property type="evidence" value="ECO:0007669"/>
    <property type="project" value="InterPro"/>
</dbReference>
<dbReference type="GO" id="GO:0019288">
    <property type="term" value="P:isopentenyl diphosphate biosynthetic process, methylerythritol 4-phosphate pathway"/>
    <property type="evidence" value="ECO:0007669"/>
    <property type="project" value="UniProtKB-UniRule"/>
</dbReference>
<dbReference type="GO" id="GO:0016114">
    <property type="term" value="P:terpenoid biosynthetic process"/>
    <property type="evidence" value="ECO:0007669"/>
    <property type="project" value="InterPro"/>
</dbReference>
<dbReference type="FunFam" id="3.20.20.20:FF:000001">
    <property type="entry name" value="4-hydroxy-3-methylbut-2-en-1-yl diphosphate synthase (flavodoxin)"/>
    <property type="match status" value="1"/>
</dbReference>
<dbReference type="FunFam" id="3.30.413.10:FF:000002">
    <property type="entry name" value="4-hydroxy-3-methylbut-2-en-1-yl diphosphate synthase (flavodoxin)"/>
    <property type="match status" value="1"/>
</dbReference>
<dbReference type="Gene3D" id="3.20.20.20">
    <property type="entry name" value="Dihydropteroate synthase-like"/>
    <property type="match status" value="1"/>
</dbReference>
<dbReference type="Gene3D" id="3.30.413.10">
    <property type="entry name" value="Sulfite Reductase Hemoprotein, domain 1"/>
    <property type="match status" value="1"/>
</dbReference>
<dbReference type="HAMAP" id="MF_00159">
    <property type="entry name" value="IspG"/>
    <property type="match status" value="1"/>
</dbReference>
<dbReference type="InterPro" id="IPR011005">
    <property type="entry name" value="Dihydropteroate_synth-like_sf"/>
</dbReference>
<dbReference type="InterPro" id="IPR016425">
    <property type="entry name" value="IspG_bac"/>
</dbReference>
<dbReference type="InterPro" id="IPR004588">
    <property type="entry name" value="IspG_bac-typ"/>
</dbReference>
<dbReference type="InterPro" id="IPR045854">
    <property type="entry name" value="NO2/SO3_Rdtase_4Fe4S_sf"/>
</dbReference>
<dbReference type="NCBIfam" id="TIGR00612">
    <property type="entry name" value="ispG_gcpE"/>
    <property type="match status" value="1"/>
</dbReference>
<dbReference type="NCBIfam" id="NF001540">
    <property type="entry name" value="PRK00366.1"/>
    <property type="match status" value="1"/>
</dbReference>
<dbReference type="PANTHER" id="PTHR30454">
    <property type="entry name" value="4-HYDROXY-3-METHYLBUT-2-EN-1-YL DIPHOSPHATE SYNTHASE"/>
    <property type="match status" value="1"/>
</dbReference>
<dbReference type="PANTHER" id="PTHR30454:SF0">
    <property type="entry name" value="4-HYDROXY-3-METHYLBUT-2-EN-1-YL DIPHOSPHATE SYNTHASE (FERREDOXIN), CHLOROPLASTIC"/>
    <property type="match status" value="1"/>
</dbReference>
<dbReference type="Pfam" id="PF04551">
    <property type="entry name" value="GcpE"/>
    <property type="match status" value="1"/>
</dbReference>
<dbReference type="PIRSF" id="PIRSF004640">
    <property type="entry name" value="IspG"/>
    <property type="match status" value="1"/>
</dbReference>
<dbReference type="SUPFAM" id="SSF51717">
    <property type="entry name" value="Dihydropteroate synthetase-like"/>
    <property type="match status" value="1"/>
</dbReference>
<dbReference type="SUPFAM" id="SSF56014">
    <property type="entry name" value="Nitrite and sulphite reductase 4Fe-4S domain-like"/>
    <property type="match status" value="1"/>
</dbReference>
<organism>
    <name type="scientific">Klebsiella pneumoniae subsp. pneumoniae (strain ATCC 700721 / MGH 78578)</name>
    <dbReference type="NCBI Taxonomy" id="272620"/>
    <lineage>
        <taxon>Bacteria</taxon>
        <taxon>Pseudomonadati</taxon>
        <taxon>Pseudomonadota</taxon>
        <taxon>Gammaproteobacteria</taxon>
        <taxon>Enterobacterales</taxon>
        <taxon>Enterobacteriaceae</taxon>
        <taxon>Klebsiella/Raoultella group</taxon>
        <taxon>Klebsiella</taxon>
        <taxon>Klebsiella pneumoniae complex</taxon>
    </lineage>
</organism>
<sequence length="373" mass="40727">MHNQAPIQRRKSKRIYVGNVPIGDGAPIAVQSMTNTRTTDVAATVNQIKALERVGADIVRVSVPTMDAAEAFKLIKQQVNVPLVADIHFDYRIALKVAEYGVDCLRINPGNIGNEERIRMVVDCARDKNIPIRIGVNAGSLEKDLQEKYGEPTPQALLESAMRHVDHLDRLNFDQFKVSVKASDVFLAVESYRLLAKQIDQPLHLGITEAGGARSGAVKSAIGLGLLLSEGIGDTLRVSLAADPVEEIKVGFDILKSLRIRSRGINFIACPTCSRQEFDVIGTVNALEQRLEDIITPMDVSIIGCVVNGPGEALVSTLGVTGGNKKSGLYEDGVRKDRLDNNDMIDQLEARIRAKASMLDEARRIDVQQVEAK</sequence>
<accession>A6TCD4</accession>
<keyword id="KW-0004">4Fe-4S</keyword>
<keyword id="KW-0408">Iron</keyword>
<keyword id="KW-0411">Iron-sulfur</keyword>
<keyword id="KW-0414">Isoprene biosynthesis</keyword>
<keyword id="KW-0479">Metal-binding</keyword>
<keyword id="KW-0560">Oxidoreductase</keyword>
<proteinExistence type="inferred from homology"/>
<comment type="function">
    <text evidence="1">Converts 2C-methyl-D-erythritol 2,4-cyclodiphosphate (ME-2,4cPP) into 1-hydroxy-2-methyl-2-(E)-butenyl 4-diphosphate.</text>
</comment>
<comment type="catalytic activity">
    <reaction evidence="1">
        <text>(2E)-4-hydroxy-3-methylbut-2-enyl diphosphate + oxidized [flavodoxin] + H2O + 2 H(+) = 2-C-methyl-D-erythritol 2,4-cyclic diphosphate + reduced [flavodoxin]</text>
        <dbReference type="Rhea" id="RHEA:43604"/>
        <dbReference type="Rhea" id="RHEA-COMP:10622"/>
        <dbReference type="Rhea" id="RHEA-COMP:10623"/>
        <dbReference type="ChEBI" id="CHEBI:15377"/>
        <dbReference type="ChEBI" id="CHEBI:15378"/>
        <dbReference type="ChEBI" id="CHEBI:57618"/>
        <dbReference type="ChEBI" id="CHEBI:58210"/>
        <dbReference type="ChEBI" id="CHEBI:58483"/>
        <dbReference type="ChEBI" id="CHEBI:128753"/>
        <dbReference type="EC" id="1.17.7.3"/>
    </reaction>
</comment>
<comment type="cofactor">
    <cofactor evidence="1">
        <name>[4Fe-4S] cluster</name>
        <dbReference type="ChEBI" id="CHEBI:49883"/>
    </cofactor>
    <text evidence="1">Binds 1 [4Fe-4S] cluster.</text>
</comment>
<comment type="pathway">
    <text evidence="1">Isoprenoid biosynthesis; isopentenyl diphosphate biosynthesis via DXP pathway; isopentenyl diphosphate from 1-deoxy-D-xylulose 5-phosphate: step 5/6.</text>
</comment>
<comment type="similarity">
    <text evidence="1">Belongs to the IspG family.</text>
</comment>
<reference key="1">
    <citation type="submission" date="2006-09" db="EMBL/GenBank/DDBJ databases">
        <authorList>
            <consortium name="The Klebsiella pneumonia Genome Sequencing Project"/>
            <person name="McClelland M."/>
            <person name="Sanderson E.K."/>
            <person name="Spieth J."/>
            <person name="Clifton W.S."/>
            <person name="Latreille P."/>
            <person name="Sabo A."/>
            <person name="Pepin K."/>
            <person name="Bhonagiri V."/>
            <person name="Porwollik S."/>
            <person name="Ali J."/>
            <person name="Wilson R.K."/>
        </authorList>
    </citation>
    <scope>NUCLEOTIDE SEQUENCE [LARGE SCALE GENOMIC DNA]</scope>
    <source>
        <strain>ATCC 700721 / MGH 78578</strain>
    </source>
</reference>
<evidence type="ECO:0000255" key="1">
    <source>
        <dbReference type="HAMAP-Rule" id="MF_00159"/>
    </source>
</evidence>